<comment type="function">
    <text evidence="1">Required for formate dehydrogenase (FDH) activity. Acts as a sulfur carrier protein that transfers sulfur from IscS to the molybdenum cofactor prior to its insertion into FDH.</text>
</comment>
<comment type="subcellular location">
    <subcellularLocation>
        <location evidence="1">Cytoplasm</location>
    </subcellularLocation>
</comment>
<comment type="similarity">
    <text evidence="1">Belongs to the FdhD family.</text>
</comment>
<feature type="chain" id="PRO_1000020823" description="Sulfur carrier protein FdhD">
    <location>
        <begin position="1"/>
        <end position="265"/>
    </location>
</feature>
<feature type="active site" description="Cysteine persulfide intermediate" evidence="1">
    <location>
        <position position="107"/>
    </location>
</feature>
<dbReference type="EMBL" id="CP000255">
    <property type="protein sequence ID" value="ABD22787.1"/>
    <property type="molecule type" value="Genomic_DNA"/>
</dbReference>
<dbReference type="RefSeq" id="WP_001030825.1">
    <property type="nucleotide sequence ID" value="NZ_CP027476.1"/>
</dbReference>
<dbReference type="SMR" id="Q2FEL2"/>
<dbReference type="KEGG" id="saa:SAUSA300_2231"/>
<dbReference type="HOGENOM" id="CLU_056887_4_1_9"/>
<dbReference type="OMA" id="RYCAGAT"/>
<dbReference type="Proteomes" id="UP000001939">
    <property type="component" value="Chromosome"/>
</dbReference>
<dbReference type="GO" id="GO:0005737">
    <property type="term" value="C:cytoplasm"/>
    <property type="evidence" value="ECO:0007669"/>
    <property type="project" value="UniProtKB-SubCell"/>
</dbReference>
<dbReference type="GO" id="GO:0097163">
    <property type="term" value="F:sulfur carrier activity"/>
    <property type="evidence" value="ECO:0007669"/>
    <property type="project" value="UniProtKB-UniRule"/>
</dbReference>
<dbReference type="GO" id="GO:0016783">
    <property type="term" value="F:sulfurtransferase activity"/>
    <property type="evidence" value="ECO:0007669"/>
    <property type="project" value="InterPro"/>
</dbReference>
<dbReference type="GO" id="GO:0006777">
    <property type="term" value="P:Mo-molybdopterin cofactor biosynthetic process"/>
    <property type="evidence" value="ECO:0007669"/>
    <property type="project" value="UniProtKB-UniRule"/>
</dbReference>
<dbReference type="Gene3D" id="3.10.20.10">
    <property type="match status" value="1"/>
</dbReference>
<dbReference type="Gene3D" id="3.40.140.10">
    <property type="entry name" value="Cytidine Deaminase, domain 2"/>
    <property type="match status" value="1"/>
</dbReference>
<dbReference type="HAMAP" id="MF_00187">
    <property type="entry name" value="FdhD"/>
    <property type="match status" value="1"/>
</dbReference>
<dbReference type="InterPro" id="IPR016193">
    <property type="entry name" value="Cytidine_deaminase-like"/>
</dbReference>
<dbReference type="InterPro" id="IPR003786">
    <property type="entry name" value="FdhD"/>
</dbReference>
<dbReference type="NCBIfam" id="TIGR00129">
    <property type="entry name" value="fdhD_narQ"/>
    <property type="match status" value="1"/>
</dbReference>
<dbReference type="PANTHER" id="PTHR30592">
    <property type="entry name" value="FORMATE DEHYDROGENASE"/>
    <property type="match status" value="1"/>
</dbReference>
<dbReference type="PANTHER" id="PTHR30592:SF1">
    <property type="entry name" value="SULFUR CARRIER PROTEIN FDHD"/>
    <property type="match status" value="1"/>
</dbReference>
<dbReference type="Pfam" id="PF02634">
    <property type="entry name" value="FdhD-NarQ"/>
    <property type="match status" value="1"/>
</dbReference>
<dbReference type="PIRSF" id="PIRSF015626">
    <property type="entry name" value="FdhD"/>
    <property type="match status" value="1"/>
</dbReference>
<dbReference type="SUPFAM" id="SSF53927">
    <property type="entry name" value="Cytidine deaminase-like"/>
    <property type="match status" value="1"/>
</dbReference>
<organism>
    <name type="scientific">Staphylococcus aureus (strain USA300)</name>
    <dbReference type="NCBI Taxonomy" id="367830"/>
    <lineage>
        <taxon>Bacteria</taxon>
        <taxon>Bacillati</taxon>
        <taxon>Bacillota</taxon>
        <taxon>Bacilli</taxon>
        <taxon>Bacillales</taxon>
        <taxon>Staphylococcaceae</taxon>
        <taxon>Staphylococcus</taxon>
    </lineage>
</organism>
<name>FDHD_STAA3</name>
<reference key="1">
    <citation type="journal article" date="2006" name="Lancet">
        <title>Complete genome sequence of USA300, an epidemic clone of community-acquired meticillin-resistant Staphylococcus aureus.</title>
        <authorList>
            <person name="Diep B.A."/>
            <person name="Gill S.R."/>
            <person name="Chang R.F."/>
            <person name="Phan T.H."/>
            <person name="Chen J.H."/>
            <person name="Davidson M.G."/>
            <person name="Lin F."/>
            <person name="Lin J."/>
            <person name="Carleton H.A."/>
            <person name="Mongodin E.F."/>
            <person name="Sensabaugh G.F."/>
            <person name="Perdreau-Remington F."/>
        </authorList>
    </citation>
    <scope>NUCLEOTIDE SEQUENCE [LARGE SCALE GENOMIC DNA]</scope>
    <source>
        <strain>USA300</strain>
    </source>
</reference>
<gene>
    <name evidence="1" type="primary">fdhD</name>
    <name type="ordered locus">SAUSA300_2231</name>
</gene>
<protein>
    <recommendedName>
        <fullName evidence="1">Sulfur carrier protein FdhD</fullName>
    </recommendedName>
</protein>
<keyword id="KW-0963">Cytoplasm</keyword>
<keyword id="KW-0501">Molybdenum cofactor biosynthesis</keyword>
<proteinExistence type="inferred from homology"/>
<evidence type="ECO:0000255" key="1">
    <source>
        <dbReference type="HAMAP-Rule" id="MF_00187"/>
    </source>
</evidence>
<sequence length="265" mass="29416">MNKDVSLGQPIVRYEDGKLFNTTDQYVTEFPLTIMVNGEEFATVICSPTNLEELVIGFLASEGAILKRDELKSVLIDDSKGFAHVELNKDLGDRFQYSTKRMIASCCGKSREFYFQNDAAIAKTSMSKITLTPMQIINMMTRLQSASHIYQETGGLHNAAISDGLTFFVHRQDIGRHNALDKLYGFCIQRHITVRDKVLIFSGRISSEILIKAAKIGVGVILSKSAPTTLAVTLANDLNITAVGFIRNGGFNIYSHPERIIDSEQ</sequence>
<accession>Q2FEL2</accession>